<keyword id="KW-1003">Cell membrane</keyword>
<keyword id="KW-0472">Membrane</keyword>
<keyword id="KW-1185">Reference proteome</keyword>
<keyword id="KW-0812">Transmembrane</keyword>
<keyword id="KW-1133">Transmembrane helix</keyword>
<keyword id="KW-0813">Transport</keyword>
<evidence type="ECO:0000255" key="1"/>
<evidence type="ECO:0000256" key="2">
    <source>
        <dbReference type="SAM" id="MobiDB-lite"/>
    </source>
</evidence>
<evidence type="ECO:0000305" key="3"/>
<accession>P94412</accession>
<accession>Q797P3</accession>
<reference key="1">
    <citation type="journal article" date="1996" name="Microbiology">
        <title>The 25 degrees-36 degrees region of the Bacillus subtilis chromosome: determination of the sequence of a 146 kb segment and identification of 113 genes.</title>
        <authorList>
            <person name="Yamane K."/>
            <person name="Kumano M."/>
            <person name="Kurita K."/>
        </authorList>
    </citation>
    <scope>NUCLEOTIDE SEQUENCE [GENOMIC DNA]</scope>
    <source>
        <strain>168</strain>
    </source>
</reference>
<reference key="2">
    <citation type="journal article" date="1997" name="Nature">
        <title>The complete genome sequence of the Gram-positive bacterium Bacillus subtilis.</title>
        <authorList>
            <person name="Kunst F."/>
            <person name="Ogasawara N."/>
            <person name="Moszer I."/>
            <person name="Albertini A.M."/>
            <person name="Alloni G."/>
            <person name="Azevedo V."/>
            <person name="Bertero M.G."/>
            <person name="Bessieres P."/>
            <person name="Bolotin A."/>
            <person name="Borchert S."/>
            <person name="Borriss R."/>
            <person name="Boursier L."/>
            <person name="Brans A."/>
            <person name="Braun M."/>
            <person name="Brignell S.C."/>
            <person name="Bron S."/>
            <person name="Brouillet S."/>
            <person name="Bruschi C.V."/>
            <person name="Caldwell B."/>
            <person name="Capuano V."/>
            <person name="Carter N.M."/>
            <person name="Choi S.-K."/>
            <person name="Codani J.-J."/>
            <person name="Connerton I.F."/>
            <person name="Cummings N.J."/>
            <person name="Daniel R.A."/>
            <person name="Denizot F."/>
            <person name="Devine K.M."/>
            <person name="Duesterhoeft A."/>
            <person name="Ehrlich S.D."/>
            <person name="Emmerson P.T."/>
            <person name="Entian K.-D."/>
            <person name="Errington J."/>
            <person name="Fabret C."/>
            <person name="Ferrari E."/>
            <person name="Foulger D."/>
            <person name="Fritz C."/>
            <person name="Fujita M."/>
            <person name="Fujita Y."/>
            <person name="Fuma S."/>
            <person name="Galizzi A."/>
            <person name="Galleron N."/>
            <person name="Ghim S.-Y."/>
            <person name="Glaser P."/>
            <person name="Goffeau A."/>
            <person name="Golightly E.J."/>
            <person name="Grandi G."/>
            <person name="Guiseppi G."/>
            <person name="Guy B.J."/>
            <person name="Haga K."/>
            <person name="Haiech J."/>
            <person name="Harwood C.R."/>
            <person name="Henaut A."/>
            <person name="Hilbert H."/>
            <person name="Holsappel S."/>
            <person name="Hosono S."/>
            <person name="Hullo M.-F."/>
            <person name="Itaya M."/>
            <person name="Jones L.-M."/>
            <person name="Joris B."/>
            <person name="Karamata D."/>
            <person name="Kasahara Y."/>
            <person name="Klaerr-Blanchard M."/>
            <person name="Klein C."/>
            <person name="Kobayashi Y."/>
            <person name="Koetter P."/>
            <person name="Koningstein G."/>
            <person name="Krogh S."/>
            <person name="Kumano M."/>
            <person name="Kurita K."/>
            <person name="Lapidus A."/>
            <person name="Lardinois S."/>
            <person name="Lauber J."/>
            <person name="Lazarevic V."/>
            <person name="Lee S.-M."/>
            <person name="Levine A."/>
            <person name="Liu H."/>
            <person name="Masuda S."/>
            <person name="Mauel C."/>
            <person name="Medigue C."/>
            <person name="Medina N."/>
            <person name="Mellado R.P."/>
            <person name="Mizuno M."/>
            <person name="Moestl D."/>
            <person name="Nakai S."/>
            <person name="Noback M."/>
            <person name="Noone D."/>
            <person name="O'Reilly M."/>
            <person name="Ogawa K."/>
            <person name="Ogiwara A."/>
            <person name="Oudega B."/>
            <person name="Park S.-H."/>
            <person name="Parro V."/>
            <person name="Pohl T.M."/>
            <person name="Portetelle D."/>
            <person name="Porwollik S."/>
            <person name="Prescott A.M."/>
            <person name="Presecan E."/>
            <person name="Pujic P."/>
            <person name="Purnelle B."/>
            <person name="Rapoport G."/>
            <person name="Rey M."/>
            <person name="Reynolds S."/>
            <person name="Rieger M."/>
            <person name="Rivolta C."/>
            <person name="Rocha E."/>
            <person name="Roche B."/>
            <person name="Rose M."/>
            <person name="Sadaie Y."/>
            <person name="Sato T."/>
            <person name="Scanlan E."/>
            <person name="Schleich S."/>
            <person name="Schroeter R."/>
            <person name="Scoffone F."/>
            <person name="Sekiguchi J."/>
            <person name="Sekowska A."/>
            <person name="Seror S.J."/>
            <person name="Serror P."/>
            <person name="Shin B.-S."/>
            <person name="Soldo B."/>
            <person name="Sorokin A."/>
            <person name="Tacconi E."/>
            <person name="Takagi T."/>
            <person name="Takahashi H."/>
            <person name="Takemaru K."/>
            <person name="Takeuchi M."/>
            <person name="Tamakoshi A."/>
            <person name="Tanaka T."/>
            <person name="Terpstra P."/>
            <person name="Tognoni A."/>
            <person name="Tosato V."/>
            <person name="Uchiyama S."/>
            <person name="Vandenbol M."/>
            <person name="Vannier F."/>
            <person name="Vassarotti A."/>
            <person name="Viari A."/>
            <person name="Wambutt R."/>
            <person name="Wedler E."/>
            <person name="Wedler H."/>
            <person name="Weitzenegger T."/>
            <person name="Winters P."/>
            <person name="Wipat A."/>
            <person name="Yamamoto H."/>
            <person name="Yamane K."/>
            <person name="Yasumoto K."/>
            <person name="Yata K."/>
            <person name="Yoshida K."/>
            <person name="Yoshikawa H.-F."/>
            <person name="Zumstein E."/>
            <person name="Yoshikawa H."/>
            <person name="Danchin A."/>
        </authorList>
    </citation>
    <scope>NUCLEOTIDE SEQUENCE [LARGE SCALE GENOMIC DNA]</scope>
    <source>
        <strain>168</strain>
    </source>
</reference>
<reference key="3">
    <citation type="journal article" date="2009" name="Microbiology">
        <title>From a consortium sequence to a unified sequence: the Bacillus subtilis 168 reference genome a decade later.</title>
        <authorList>
            <person name="Barbe V."/>
            <person name="Cruveiller S."/>
            <person name="Kunst F."/>
            <person name="Lenoble P."/>
            <person name="Meurice G."/>
            <person name="Sekowska A."/>
            <person name="Vallenet D."/>
            <person name="Wang T."/>
            <person name="Moszer I."/>
            <person name="Medigue C."/>
            <person name="Danchin A."/>
        </authorList>
    </citation>
    <scope>SEQUENCE REVISION TO 78</scope>
</reference>
<name>YCLI_BACSU</name>
<comment type="subcellular location">
    <subcellularLocation>
        <location evidence="3">Cell membrane</location>
        <topology evidence="3">Multi-pass membrane protein</topology>
    </subcellularLocation>
</comment>
<comment type="similarity">
    <text evidence="3">Belongs to the ABC-4 integral membrane protein family.</text>
</comment>
<proteinExistence type="inferred from homology"/>
<protein>
    <recommendedName>
        <fullName>Uncharacterized ABC transporter permease YclI</fullName>
    </recommendedName>
</protein>
<feature type="chain" id="PRO_0000360192" description="Uncharacterized ABC transporter permease YclI">
    <location>
        <begin position="1"/>
        <end position="486"/>
    </location>
</feature>
<feature type="transmembrane region" description="Helical" evidence="1">
    <location>
        <begin position="18"/>
        <end position="38"/>
    </location>
</feature>
<feature type="transmembrane region" description="Helical" evidence="1">
    <location>
        <begin position="324"/>
        <end position="344"/>
    </location>
</feature>
<feature type="transmembrane region" description="Helical" evidence="1">
    <location>
        <begin position="365"/>
        <end position="385"/>
    </location>
</feature>
<feature type="transmembrane region" description="Helical" evidence="1">
    <location>
        <begin position="451"/>
        <end position="471"/>
    </location>
</feature>
<feature type="region of interest" description="Disordered" evidence="2">
    <location>
        <begin position="62"/>
        <end position="82"/>
    </location>
</feature>
<feature type="region of interest" description="Disordered" evidence="2">
    <location>
        <begin position="117"/>
        <end position="147"/>
    </location>
</feature>
<feature type="compositionally biased region" description="Basic and acidic residues" evidence="2">
    <location>
        <begin position="62"/>
        <end position="79"/>
    </location>
</feature>
<feature type="compositionally biased region" description="Low complexity" evidence="2">
    <location>
        <begin position="119"/>
        <end position="132"/>
    </location>
</feature>
<feature type="sequence conflict" description="In Ref. 1; BAA09006." evidence="3" ref="1">
    <original>S</original>
    <variation>T</variation>
    <location>
        <position position="78"/>
    </location>
</feature>
<organism>
    <name type="scientific">Bacillus subtilis (strain 168)</name>
    <dbReference type="NCBI Taxonomy" id="224308"/>
    <lineage>
        <taxon>Bacteria</taxon>
        <taxon>Bacillati</taxon>
        <taxon>Bacillota</taxon>
        <taxon>Bacilli</taxon>
        <taxon>Bacillales</taxon>
        <taxon>Bacillaceae</taxon>
        <taxon>Bacillus</taxon>
    </lineage>
</organism>
<gene>
    <name type="primary">yclI</name>
    <name type="ordered locus">BSU03740</name>
</gene>
<dbReference type="EMBL" id="D50453">
    <property type="protein sequence ID" value="BAA09006.1"/>
    <property type="molecule type" value="Genomic_DNA"/>
</dbReference>
<dbReference type="EMBL" id="AL009126">
    <property type="protein sequence ID" value="CAB12182.2"/>
    <property type="molecule type" value="Genomic_DNA"/>
</dbReference>
<dbReference type="PIR" id="F69762">
    <property type="entry name" value="F69762"/>
</dbReference>
<dbReference type="RefSeq" id="NP_388256.2">
    <property type="nucleotide sequence ID" value="NC_000964.3"/>
</dbReference>
<dbReference type="RefSeq" id="WP_003234506.1">
    <property type="nucleotide sequence ID" value="NZ_OZ025638.1"/>
</dbReference>
<dbReference type="SMR" id="P94412"/>
<dbReference type="FunCoup" id="P94412">
    <property type="interactions" value="36"/>
</dbReference>
<dbReference type="IntAct" id="P94412">
    <property type="interactions" value="43"/>
</dbReference>
<dbReference type="STRING" id="224308.BSU03740"/>
<dbReference type="PaxDb" id="224308-BSU03740"/>
<dbReference type="EnsemblBacteria" id="CAB12182">
    <property type="protein sequence ID" value="CAB12182"/>
    <property type="gene ID" value="BSU_03740"/>
</dbReference>
<dbReference type="GeneID" id="938279"/>
<dbReference type="KEGG" id="bsu:BSU03740"/>
<dbReference type="PATRIC" id="fig|224308.179.peg.394"/>
<dbReference type="eggNOG" id="COG0577">
    <property type="taxonomic scope" value="Bacteria"/>
</dbReference>
<dbReference type="InParanoid" id="P94412"/>
<dbReference type="OrthoDB" id="9812886at2"/>
<dbReference type="PhylomeDB" id="P94412"/>
<dbReference type="BioCyc" id="BSUB:BSU03740-MONOMER"/>
<dbReference type="Proteomes" id="UP000001570">
    <property type="component" value="Chromosome"/>
</dbReference>
<dbReference type="GO" id="GO:0005886">
    <property type="term" value="C:plasma membrane"/>
    <property type="evidence" value="ECO:0000318"/>
    <property type="project" value="GO_Central"/>
</dbReference>
<dbReference type="GO" id="GO:0022857">
    <property type="term" value="F:transmembrane transporter activity"/>
    <property type="evidence" value="ECO:0000318"/>
    <property type="project" value="GO_Central"/>
</dbReference>
<dbReference type="InterPro" id="IPR003838">
    <property type="entry name" value="ABC3_permease_C"/>
</dbReference>
<dbReference type="InterPro" id="IPR025857">
    <property type="entry name" value="MacB_PCD"/>
</dbReference>
<dbReference type="InterPro" id="IPR050250">
    <property type="entry name" value="Macrolide_Exporter_MacB"/>
</dbReference>
<dbReference type="PANTHER" id="PTHR30572:SF9">
    <property type="entry name" value="ABC TRANSPORTER PERMEASE PROTEIN"/>
    <property type="match status" value="1"/>
</dbReference>
<dbReference type="PANTHER" id="PTHR30572">
    <property type="entry name" value="MEMBRANE COMPONENT OF TRANSPORTER-RELATED"/>
    <property type="match status" value="1"/>
</dbReference>
<dbReference type="Pfam" id="PF02687">
    <property type="entry name" value="FtsX"/>
    <property type="match status" value="1"/>
</dbReference>
<dbReference type="Pfam" id="PF12704">
    <property type="entry name" value="MacB_PCD"/>
    <property type="match status" value="1"/>
</dbReference>
<sequence length="486" mass="51901">MNFIKRAFWNMKAKKGKTLLQLFVFTVICVFVLSGLAIQSAAQKSSELARQELGGSVTLQVDRQKQMEKQQDSGEKRSFESTPIKVSDANKLAALDHVKSYNYTTSASANAGNFDAIESSSSSDSSSSSSSSNAKNSQGGGQGGPQMVQADLSIEGVISTALVDDFSDGDSKITDGRAITKSDVGKKVTVINETLAEENDLSVGDSITIESATDEDTTVKLKIVGIYKTTSSGDDQAQNFSFLNPYNKLYTPYTATAALKGDDYKNTIDSAVYYMDDAKNMDTFVKAAKKTSIDFDTYTLNTNDQLYQQMVGPIENVASFSKNVVYLVSVAGAVILGLIVMMSIRERKYEMGVLMAIGEKRWKLIGQFLTEILIVAVIAIGLASVTGNLVANQLGNQLLSQQISSSTDSTQTASGQMPGGGGGMGGKMFGHSSSNVDVIDSLNVAVSMNDMLILGGIGILIAIIATLLPSISVLRLHPKTILTKQE</sequence>